<organism>
    <name type="scientific">Escherichia coli O6:H1 (strain CFT073 / ATCC 700928 / UPEC)</name>
    <dbReference type="NCBI Taxonomy" id="199310"/>
    <lineage>
        <taxon>Bacteria</taxon>
        <taxon>Pseudomonadati</taxon>
        <taxon>Pseudomonadota</taxon>
        <taxon>Gammaproteobacteria</taxon>
        <taxon>Enterobacterales</taxon>
        <taxon>Enterobacteriaceae</taxon>
        <taxon>Escherichia</taxon>
    </lineage>
</organism>
<gene>
    <name type="primary">cra</name>
    <name type="synonym">fruR</name>
    <name type="ordered locus">c0098</name>
</gene>
<keyword id="KW-0010">Activator</keyword>
<keyword id="KW-0238">DNA-binding</keyword>
<keyword id="KW-1185">Reference proteome</keyword>
<keyword id="KW-0678">Repressor</keyword>
<keyword id="KW-0804">Transcription</keyword>
<keyword id="KW-0805">Transcription regulation</keyword>
<comment type="function">
    <text evidence="1">Global transcriptional regulator, which plays an important role in the regulation of carbon metabolism.</text>
</comment>
<comment type="subunit">
    <text evidence="1">Homotetramer.</text>
</comment>
<proteinExistence type="inferred from homology"/>
<evidence type="ECO:0000250" key="1"/>
<evidence type="ECO:0000255" key="2">
    <source>
        <dbReference type="PROSITE-ProRule" id="PRU00111"/>
    </source>
</evidence>
<accession>P0ACP2</accession>
<accession>P21168</accession>
<reference key="1">
    <citation type="journal article" date="2002" name="Proc. Natl. Acad. Sci. U.S.A.">
        <title>Extensive mosaic structure revealed by the complete genome sequence of uropathogenic Escherichia coli.</title>
        <authorList>
            <person name="Welch R.A."/>
            <person name="Burland V."/>
            <person name="Plunkett G. III"/>
            <person name="Redford P."/>
            <person name="Roesch P."/>
            <person name="Rasko D."/>
            <person name="Buckles E.L."/>
            <person name="Liou S.-R."/>
            <person name="Boutin A."/>
            <person name="Hackett J."/>
            <person name="Stroud D."/>
            <person name="Mayhew G.F."/>
            <person name="Rose D.J."/>
            <person name="Zhou S."/>
            <person name="Schwartz D.C."/>
            <person name="Perna N.T."/>
            <person name="Mobley H.L.T."/>
            <person name="Donnenberg M.S."/>
            <person name="Blattner F.R."/>
        </authorList>
    </citation>
    <scope>NUCLEOTIDE SEQUENCE [LARGE SCALE GENOMIC DNA]</scope>
    <source>
        <strain>CFT073 / ATCC 700928 / UPEC</strain>
    </source>
</reference>
<name>CRA_ECOL6</name>
<feature type="chain" id="PRO_0000107947" description="Catabolite repressor/activator">
    <location>
        <begin position="1"/>
        <end position="334"/>
    </location>
</feature>
<feature type="domain" description="HTH lacI-type" evidence="2">
    <location>
        <begin position="1"/>
        <end position="58"/>
    </location>
</feature>
<feature type="DNA-binding region" description="H-T-H motif" evidence="2">
    <location>
        <begin position="3"/>
        <end position="22"/>
    </location>
</feature>
<protein>
    <recommendedName>
        <fullName>Catabolite repressor/activator</fullName>
    </recommendedName>
    <alternativeName>
        <fullName>Fructose repressor</fullName>
    </alternativeName>
</protein>
<dbReference type="EMBL" id="AE014075">
    <property type="protein sequence ID" value="AAN78596.1"/>
    <property type="molecule type" value="Genomic_DNA"/>
</dbReference>
<dbReference type="RefSeq" id="WP_000762401.1">
    <property type="nucleotide sequence ID" value="NZ_CP051263.1"/>
</dbReference>
<dbReference type="SMR" id="P0ACP2"/>
<dbReference type="STRING" id="199310.c0098"/>
<dbReference type="GeneID" id="86862590"/>
<dbReference type="KEGG" id="ecc:c0098"/>
<dbReference type="eggNOG" id="COG1609">
    <property type="taxonomic scope" value="Bacteria"/>
</dbReference>
<dbReference type="HOGENOM" id="CLU_037628_6_0_6"/>
<dbReference type="BioCyc" id="ECOL199310:C0098-MONOMER"/>
<dbReference type="Proteomes" id="UP000001410">
    <property type="component" value="Chromosome"/>
</dbReference>
<dbReference type="GO" id="GO:0003700">
    <property type="term" value="F:DNA-binding transcription factor activity"/>
    <property type="evidence" value="ECO:0007669"/>
    <property type="project" value="TreeGrafter"/>
</dbReference>
<dbReference type="GO" id="GO:0000976">
    <property type="term" value="F:transcription cis-regulatory region binding"/>
    <property type="evidence" value="ECO:0007669"/>
    <property type="project" value="TreeGrafter"/>
</dbReference>
<dbReference type="GO" id="GO:0009750">
    <property type="term" value="P:response to fructose"/>
    <property type="evidence" value="ECO:0007669"/>
    <property type="project" value="InterPro"/>
</dbReference>
<dbReference type="CDD" id="cd01392">
    <property type="entry name" value="HTH_LacI"/>
    <property type="match status" value="1"/>
</dbReference>
<dbReference type="CDD" id="cd06274">
    <property type="entry name" value="PBP1_FruR"/>
    <property type="match status" value="1"/>
</dbReference>
<dbReference type="FunFam" id="1.10.260.40:FF:000008">
    <property type="entry name" value="Fructose repressor (Catabolite repressor/activator)"/>
    <property type="match status" value="1"/>
</dbReference>
<dbReference type="FunFam" id="3.40.50.2300:FF:000022">
    <property type="entry name" value="Fructose repressor (Catabolite repressor/activator)"/>
    <property type="match status" value="1"/>
</dbReference>
<dbReference type="FunFam" id="3.40.50.2300:FF:000049">
    <property type="entry name" value="Fructose repressor FruR"/>
    <property type="match status" value="1"/>
</dbReference>
<dbReference type="Gene3D" id="3.40.50.2300">
    <property type="match status" value="2"/>
</dbReference>
<dbReference type="Gene3D" id="1.10.260.40">
    <property type="entry name" value="lambda repressor-like DNA-binding domains"/>
    <property type="match status" value="1"/>
</dbReference>
<dbReference type="InterPro" id="IPR012781">
    <property type="entry name" value="Fruct_sucro_rep"/>
</dbReference>
<dbReference type="InterPro" id="IPR000843">
    <property type="entry name" value="HTH_LacI"/>
</dbReference>
<dbReference type="InterPro" id="IPR010982">
    <property type="entry name" value="Lambda_DNA-bd_dom_sf"/>
</dbReference>
<dbReference type="InterPro" id="IPR001761">
    <property type="entry name" value="Peripla_BP/Lac1_sug-bd_dom"/>
</dbReference>
<dbReference type="InterPro" id="IPR028082">
    <property type="entry name" value="Peripla_BP_I"/>
</dbReference>
<dbReference type="NCBIfam" id="TIGR02417">
    <property type="entry name" value="fruct_sucro_rep"/>
    <property type="match status" value="1"/>
</dbReference>
<dbReference type="NCBIfam" id="NF008452">
    <property type="entry name" value="PRK11303.1"/>
    <property type="match status" value="1"/>
</dbReference>
<dbReference type="PANTHER" id="PTHR30146:SF45">
    <property type="entry name" value="CATABOLITE REPRESSOR_ACTIVATOR"/>
    <property type="match status" value="1"/>
</dbReference>
<dbReference type="PANTHER" id="PTHR30146">
    <property type="entry name" value="LACI-RELATED TRANSCRIPTIONAL REPRESSOR"/>
    <property type="match status" value="1"/>
</dbReference>
<dbReference type="Pfam" id="PF00356">
    <property type="entry name" value="LacI"/>
    <property type="match status" value="1"/>
</dbReference>
<dbReference type="Pfam" id="PF00532">
    <property type="entry name" value="Peripla_BP_1"/>
    <property type="match status" value="1"/>
</dbReference>
<dbReference type="SMART" id="SM00354">
    <property type="entry name" value="HTH_LACI"/>
    <property type="match status" value="1"/>
</dbReference>
<dbReference type="SUPFAM" id="SSF47413">
    <property type="entry name" value="lambda repressor-like DNA-binding domains"/>
    <property type="match status" value="1"/>
</dbReference>
<dbReference type="SUPFAM" id="SSF53822">
    <property type="entry name" value="Periplasmic binding protein-like I"/>
    <property type="match status" value="1"/>
</dbReference>
<dbReference type="PROSITE" id="PS00356">
    <property type="entry name" value="HTH_LACI_1"/>
    <property type="match status" value="1"/>
</dbReference>
<dbReference type="PROSITE" id="PS50932">
    <property type="entry name" value="HTH_LACI_2"/>
    <property type="match status" value="1"/>
</dbReference>
<sequence>MKLDEIARLAGVSRTTASYVINGKAKQYRVSDKTVEKVMAVVREHNYHPNAVAAGLRAGRTRSIGLVIPDLENTSYTRIANYLERQARQRGYQLLIACSEDQPDNEMRCIEHLLQRQVDAIIVSTSLPPEHPFYQRWANDPFPIVALDRALDREHFTSVVGADQDDAEMLAEELRKFPAETVLYLGALPELSVSFLREQGFRTAWKDDPREVHFLYANSYEREAAAQLFEKWLETHPMPQALFTTSFALLQGVMDVTLRRDGKLPSDLAIATFGDNELLDFLQCPVLAVAQRHRDVAERVLEIVLASLDEPRKPKPGLTRIKRNLYRRGVLSRS</sequence>